<keyword id="KW-0963">Cytoplasm</keyword>
<keyword id="KW-0690">Ribosome biogenesis</keyword>
<gene>
    <name evidence="1" type="primary">rimP</name>
    <name type="ordered locus">Shew185_3282</name>
</gene>
<organism>
    <name type="scientific">Shewanella baltica (strain OS185)</name>
    <dbReference type="NCBI Taxonomy" id="402882"/>
    <lineage>
        <taxon>Bacteria</taxon>
        <taxon>Pseudomonadati</taxon>
        <taxon>Pseudomonadota</taxon>
        <taxon>Gammaproteobacteria</taxon>
        <taxon>Alteromonadales</taxon>
        <taxon>Shewanellaceae</taxon>
        <taxon>Shewanella</taxon>
    </lineage>
</organism>
<protein>
    <recommendedName>
        <fullName evidence="1">Ribosome maturation factor RimP</fullName>
    </recommendedName>
</protein>
<reference key="1">
    <citation type="submission" date="2007-07" db="EMBL/GenBank/DDBJ databases">
        <title>Complete sequence of chromosome of Shewanella baltica OS185.</title>
        <authorList>
            <consortium name="US DOE Joint Genome Institute"/>
            <person name="Copeland A."/>
            <person name="Lucas S."/>
            <person name="Lapidus A."/>
            <person name="Barry K."/>
            <person name="Glavina del Rio T."/>
            <person name="Dalin E."/>
            <person name="Tice H."/>
            <person name="Pitluck S."/>
            <person name="Sims D."/>
            <person name="Brettin T."/>
            <person name="Bruce D."/>
            <person name="Detter J.C."/>
            <person name="Han C."/>
            <person name="Schmutz J."/>
            <person name="Larimer F."/>
            <person name="Land M."/>
            <person name="Hauser L."/>
            <person name="Kyrpides N."/>
            <person name="Mikhailova N."/>
            <person name="Brettar I."/>
            <person name="Rodrigues J."/>
            <person name="Konstantinidis K."/>
            <person name="Tiedje J."/>
            <person name="Richardson P."/>
        </authorList>
    </citation>
    <scope>NUCLEOTIDE SEQUENCE [LARGE SCALE GENOMIC DNA]</scope>
    <source>
        <strain>OS185</strain>
    </source>
</reference>
<name>RIMP_SHEB8</name>
<proteinExistence type="inferred from homology"/>
<dbReference type="EMBL" id="CP000753">
    <property type="protein sequence ID" value="ABS09409.1"/>
    <property type="molecule type" value="Genomic_DNA"/>
</dbReference>
<dbReference type="RefSeq" id="WP_006082718.1">
    <property type="nucleotide sequence ID" value="NC_009665.1"/>
</dbReference>
<dbReference type="SMR" id="A6WRH0"/>
<dbReference type="GeneID" id="11773460"/>
<dbReference type="KEGG" id="sbm:Shew185_3282"/>
<dbReference type="HOGENOM" id="CLU_070525_1_1_6"/>
<dbReference type="GO" id="GO:0005829">
    <property type="term" value="C:cytosol"/>
    <property type="evidence" value="ECO:0007669"/>
    <property type="project" value="TreeGrafter"/>
</dbReference>
<dbReference type="GO" id="GO:0000028">
    <property type="term" value="P:ribosomal small subunit assembly"/>
    <property type="evidence" value="ECO:0007669"/>
    <property type="project" value="TreeGrafter"/>
</dbReference>
<dbReference type="GO" id="GO:0006412">
    <property type="term" value="P:translation"/>
    <property type="evidence" value="ECO:0007669"/>
    <property type="project" value="TreeGrafter"/>
</dbReference>
<dbReference type="CDD" id="cd01734">
    <property type="entry name" value="YlxS_C"/>
    <property type="match status" value="1"/>
</dbReference>
<dbReference type="FunFam" id="2.30.30.180:FF:000001">
    <property type="entry name" value="Ribosome maturation factor RimP"/>
    <property type="match status" value="1"/>
</dbReference>
<dbReference type="FunFam" id="3.30.300.70:FF:000001">
    <property type="entry name" value="Ribosome maturation factor RimP"/>
    <property type="match status" value="1"/>
</dbReference>
<dbReference type="Gene3D" id="2.30.30.180">
    <property type="entry name" value="Ribosome maturation factor RimP, C-terminal domain"/>
    <property type="match status" value="1"/>
</dbReference>
<dbReference type="Gene3D" id="3.30.300.70">
    <property type="entry name" value="RimP-like superfamily, N-terminal"/>
    <property type="match status" value="1"/>
</dbReference>
<dbReference type="HAMAP" id="MF_01077">
    <property type="entry name" value="RimP"/>
    <property type="match status" value="1"/>
</dbReference>
<dbReference type="InterPro" id="IPR003728">
    <property type="entry name" value="Ribosome_maturation_RimP"/>
</dbReference>
<dbReference type="InterPro" id="IPR028998">
    <property type="entry name" value="RimP_C"/>
</dbReference>
<dbReference type="InterPro" id="IPR036847">
    <property type="entry name" value="RimP_C_sf"/>
</dbReference>
<dbReference type="InterPro" id="IPR028989">
    <property type="entry name" value="RimP_N"/>
</dbReference>
<dbReference type="InterPro" id="IPR035956">
    <property type="entry name" value="RimP_N_sf"/>
</dbReference>
<dbReference type="NCBIfam" id="NF000927">
    <property type="entry name" value="PRK00092.1-1"/>
    <property type="match status" value="1"/>
</dbReference>
<dbReference type="PANTHER" id="PTHR33867">
    <property type="entry name" value="RIBOSOME MATURATION FACTOR RIMP"/>
    <property type="match status" value="1"/>
</dbReference>
<dbReference type="PANTHER" id="PTHR33867:SF1">
    <property type="entry name" value="RIBOSOME MATURATION FACTOR RIMP"/>
    <property type="match status" value="1"/>
</dbReference>
<dbReference type="Pfam" id="PF17384">
    <property type="entry name" value="DUF150_C"/>
    <property type="match status" value="1"/>
</dbReference>
<dbReference type="Pfam" id="PF02576">
    <property type="entry name" value="RimP_N"/>
    <property type="match status" value="1"/>
</dbReference>
<dbReference type="SUPFAM" id="SSF74942">
    <property type="entry name" value="YhbC-like, C-terminal domain"/>
    <property type="match status" value="1"/>
</dbReference>
<dbReference type="SUPFAM" id="SSF75420">
    <property type="entry name" value="YhbC-like, N-terminal domain"/>
    <property type="match status" value="1"/>
</dbReference>
<feature type="chain" id="PRO_1000064768" description="Ribosome maturation factor RimP">
    <location>
        <begin position="1"/>
        <end position="151"/>
    </location>
</feature>
<comment type="function">
    <text evidence="1">Required for maturation of 30S ribosomal subunits.</text>
</comment>
<comment type="subcellular location">
    <subcellularLocation>
        <location evidence="1">Cytoplasm</location>
    </subcellularLocation>
</comment>
<comment type="similarity">
    <text evidence="1">Belongs to the RimP family.</text>
</comment>
<sequence length="151" mass="16444">MATLEFRLAEMLKVPVEALGFQLWGIEYVQAGKHSTLRVFIDGENGINIEDCANASRQVSAVLDVEDPISTEYTLEVSSPGVDRPLFTAEQYAGYVGEDVKLQLTMPVDGSRNLKGAITAVDGQMLSLKVNGKELVVALDNIRKGNLIAKF</sequence>
<accession>A6WRH0</accession>
<evidence type="ECO:0000255" key="1">
    <source>
        <dbReference type="HAMAP-Rule" id="MF_01077"/>
    </source>
</evidence>